<reference key="1">
    <citation type="journal article" date="2007" name="PLoS ONE">
        <title>Analysis of the neurotoxin complex genes in Clostridium botulinum A1-A4 and B1 strains: BoNT/A3, /Ba4 and /B1 clusters are located within plasmids.</title>
        <authorList>
            <person name="Smith T.J."/>
            <person name="Hill K.K."/>
            <person name="Foley B.T."/>
            <person name="Detter J.C."/>
            <person name="Munk A.C."/>
            <person name="Bruce D.C."/>
            <person name="Doggett N.A."/>
            <person name="Smith L.A."/>
            <person name="Marks J.D."/>
            <person name="Xie G."/>
            <person name="Brettin T.S."/>
        </authorList>
    </citation>
    <scope>NUCLEOTIDE SEQUENCE [LARGE SCALE GENOMIC DNA]</scope>
    <source>
        <strain>Okra / Type B1</strain>
    </source>
</reference>
<name>Y2002_CLOBK</name>
<gene>
    <name type="ordered locus">CLD_2002</name>
</gene>
<proteinExistence type="inferred from homology"/>
<dbReference type="EMBL" id="CP000939">
    <property type="protein sequence ID" value="ACA43490.1"/>
    <property type="molecule type" value="Genomic_DNA"/>
</dbReference>
<dbReference type="RefSeq" id="WP_003385813.1">
    <property type="nucleotide sequence ID" value="NC_010516.1"/>
</dbReference>
<dbReference type="SMR" id="B1IJG6"/>
<dbReference type="KEGG" id="cbb:CLD_2002"/>
<dbReference type="HOGENOM" id="CLU_162466_0_0_9"/>
<dbReference type="Proteomes" id="UP000008541">
    <property type="component" value="Chromosome"/>
</dbReference>
<dbReference type="HAMAP" id="MF_01507">
    <property type="entry name" value="UPF0297"/>
    <property type="match status" value="1"/>
</dbReference>
<dbReference type="InterPro" id="IPR009309">
    <property type="entry name" value="IreB"/>
</dbReference>
<dbReference type="NCBIfam" id="NF003997">
    <property type="entry name" value="PRK05473.1"/>
    <property type="match status" value="1"/>
</dbReference>
<dbReference type="PANTHER" id="PTHR40067">
    <property type="entry name" value="UPF0297 PROTEIN YRZL"/>
    <property type="match status" value="1"/>
</dbReference>
<dbReference type="PANTHER" id="PTHR40067:SF1">
    <property type="entry name" value="UPF0297 PROTEIN YRZL"/>
    <property type="match status" value="1"/>
</dbReference>
<dbReference type="Pfam" id="PF06135">
    <property type="entry name" value="IreB"/>
    <property type="match status" value="1"/>
</dbReference>
<dbReference type="PIRSF" id="PIRSF037258">
    <property type="entry name" value="DUF965_bac"/>
    <property type="match status" value="1"/>
</dbReference>
<sequence length="83" mass="9411">MSGDKTIQFDPVENKKTLTKEILTKVYNSLLEKGYNPVNQLVGYLISGDPTYITNYNGARSLVIKLERDEILEEVIKSYLGIN</sequence>
<feature type="chain" id="PRO_1000198234" description="UPF0297 protein CLD_2002">
    <location>
        <begin position="1"/>
        <end position="83"/>
    </location>
</feature>
<organism>
    <name type="scientific">Clostridium botulinum (strain Okra / Type B1)</name>
    <dbReference type="NCBI Taxonomy" id="498213"/>
    <lineage>
        <taxon>Bacteria</taxon>
        <taxon>Bacillati</taxon>
        <taxon>Bacillota</taxon>
        <taxon>Clostridia</taxon>
        <taxon>Eubacteriales</taxon>
        <taxon>Clostridiaceae</taxon>
        <taxon>Clostridium</taxon>
    </lineage>
</organism>
<evidence type="ECO:0000255" key="1">
    <source>
        <dbReference type="HAMAP-Rule" id="MF_01507"/>
    </source>
</evidence>
<comment type="similarity">
    <text evidence="1">Belongs to the UPF0297 family.</text>
</comment>
<accession>B1IJG6</accession>
<protein>
    <recommendedName>
        <fullName evidence="1">UPF0297 protein CLD_2002</fullName>
    </recommendedName>
</protein>